<evidence type="ECO:0000255" key="1">
    <source>
        <dbReference type="HAMAP-Rule" id="MF_00109"/>
    </source>
</evidence>
<proteinExistence type="inferred from homology"/>
<dbReference type="EC" id="2.7.1.71" evidence="1"/>
<dbReference type="EMBL" id="CP000860">
    <property type="protein sequence ID" value="ACA59501.1"/>
    <property type="molecule type" value="Genomic_DNA"/>
</dbReference>
<dbReference type="RefSeq" id="WP_012302087.1">
    <property type="nucleotide sequence ID" value="NC_010424.1"/>
</dbReference>
<dbReference type="SMR" id="B1I3D6"/>
<dbReference type="STRING" id="477974.Daud_0989"/>
<dbReference type="KEGG" id="dau:Daud_0989"/>
<dbReference type="eggNOG" id="COG0703">
    <property type="taxonomic scope" value="Bacteria"/>
</dbReference>
<dbReference type="HOGENOM" id="CLU_057607_4_0_9"/>
<dbReference type="OrthoDB" id="9800332at2"/>
<dbReference type="UniPathway" id="UPA00053">
    <property type="reaction ID" value="UER00088"/>
</dbReference>
<dbReference type="Proteomes" id="UP000008544">
    <property type="component" value="Chromosome"/>
</dbReference>
<dbReference type="GO" id="GO:0005829">
    <property type="term" value="C:cytosol"/>
    <property type="evidence" value="ECO:0007669"/>
    <property type="project" value="TreeGrafter"/>
</dbReference>
<dbReference type="GO" id="GO:0005524">
    <property type="term" value="F:ATP binding"/>
    <property type="evidence" value="ECO:0007669"/>
    <property type="project" value="UniProtKB-UniRule"/>
</dbReference>
<dbReference type="GO" id="GO:0000287">
    <property type="term" value="F:magnesium ion binding"/>
    <property type="evidence" value="ECO:0007669"/>
    <property type="project" value="UniProtKB-UniRule"/>
</dbReference>
<dbReference type="GO" id="GO:0004765">
    <property type="term" value="F:shikimate kinase activity"/>
    <property type="evidence" value="ECO:0007669"/>
    <property type="project" value="UniProtKB-UniRule"/>
</dbReference>
<dbReference type="GO" id="GO:0008652">
    <property type="term" value="P:amino acid biosynthetic process"/>
    <property type="evidence" value="ECO:0007669"/>
    <property type="project" value="UniProtKB-KW"/>
</dbReference>
<dbReference type="GO" id="GO:0009073">
    <property type="term" value="P:aromatic amino acid family biosynthetic process"/>
    <property type="evidence" value="ECO:0007669"/>
    <property type="project" value="UniProtKB-KW"/>
</dbReference>
<dbReference type="GO" id="GO:0009423">
    <property type="term" value="P:chorismate biosynthetic process"/>
    <property type="evidence" value="ECO:0007669"/>
    <property type="project" value="UniProtKB-UniRule"/>
</dbReference>
<dbReference type="CDD" id="cd00464">
    <property type="entry name" value="SK"/>
    <property type="match status" value="1"/>
</dbReference>
<dbReference type="Gene3D" id="3.40.50.300">
    <property type="entry name" value="P-loop containing nucleotide triphosphate hydrolases"/>
    <property type="match status" value="1"/>
</dbReference>
<dbReference type="HAMAP" id="MF_00109">
    <property type="entry name" value="Shikimate_kinase"/>
    <property type="match status" value="1"/>
</dbReference>
<dbReference type="InterPro" id="IPR027417">
    <property type="entry name" value="P-loop_NTPase"/>
</dbReference>
<dbReference type="InterPro" id="IPR031322">
    <property type="entry name" value="Shikimate/glucono_kinase"/>
</dbReference>
<dbReference type="InterPro" id="IPR000623">
    <property type="entry name" value="Shikimate_kinase/TSH1"/>
</dbReference>
<dbReference type="NCBIfam" id="NF010553">
    <property type="entry name" value="PRK13947.1"/>
    <property type="match status" value="1"/>
</dbReference>
<dbReference type="PANTHER" id="PTHR21087">
    <property type="entry name" value="SHIKIMATE KINASE"/>
    <property type="match status" value="1"/>
</dbReference>
<dbReference type="PANTHER" id="PTHR21087:SF16">
    <property type="entry name" value="SHIKIMATE KINASE 1, CHLOROPLASTIC"/>
    <property type="match status" value="1"/>
</dbReference>
<dbReference type="Pfam" id="PF01202">
    <property type="entry name" value="SKI"/>
    <property type="match status" value="1"/>
</dbReference>
<dbReference type="PRINTS" id="PR01100">
    <property type="entry name" value="SHIKIMTKNASE"/>
</dbReference>
<dbReference type="SUPFAM" id="SSF52540">
    <property type="entry name" value="P-loop containing nucleoside triphosphate hydrolases"/>
    <property type="match status" value="1"/>
</dbReference>
<sequence>MRNVILIGFMGTGKSAVGWRLARILDRPFLDTDSEIERLAGKPVRRIFIEDGEVRFRSEEALLCRKLAVPRGLVVATGGGVVLNPENVANLRAGGVLIGLSADPEVIYQRVRRKKSRPLLRGNVRARIRELLEERAGAYDVAEFTVDTGMHSLPKTVGLIMEFLKERGYLEAGSDSESGGVPELPDISR</sequence>
<organism>
    <name type="scientific">Desulforudis audaxviator (strain MP104C)</name>
    <dbReference type="NCBI Taxonomy" id="477974"/>
    <lineage>
        <taxon>Bacteria</taxon>
        <taxon>Bacillati</taxon>
        <taxon>Bacillota</taxon>
        <taxon>Clostridia</taxon>
        <taxon>Thermoanaerobacterales</taxon>
        <taxon>Candidatus Desulforudaceae</taxon>
        <taxon>Candidatus Desulforudis</taxon>
    </lineage>
</organism>
<name>AROK_DESAP</name>
<comment type="function">
    <text evidence="1">Catalyzes the specific phosphorylation of the 3-hydroxyl group of shikimic acid using ATP as a cosubstrate.</text>
</comment>
<comment type="catalytic activity">
    <reaction evidence="1">
        <text>shikimate + ATP = 3-phosphoshikimate + ADP + H(+)</text>
        <dbReference type="Rhea" id="RHEA:13121"/>
        <dbReference type="ChEBI" id="CHEBI:15378"/>
        <dbReference type="ChEBI" id="CHEBI:30616"/>
        <dbReference type="ChEBI" id="CHEBI:36208"/>
        <dbReference type="ChEBI" id="CHEBI:145989"/>
        <dbReference type="ChEBI" id="CHEBI:456216"/>
        <dbReference type="EC" id="2.7.1.71"/>
    </reaction>
</comment>
<comment type="cofactor">
    <cofactor evidence="1">
        <name>Mg(2+)</name>
        <dbReference type="ChEBI" id="CHEBI:18420"/>
    </cofactor>
    <text evidence="1">Binds 1 Mg(2+) ion per subunit.</text>
</comment>
<comment type="pathway">
    <text evidence="1">Metabolic intermediate biosynthesis; chorismate biosynthesis; chorismate from D-erythrose 4-phosphate and phosphoenolpyruvate: step 5/7.</text>
</comment>
<comment type="subunit">
    <text evidence="1">Monomer.</text>
</comment>
<comment type="subcellular location">
    <subcellularLocation>
        <location evidence="1">Cytoplasm</location>
    </subcellularLocation>
</comment>
<comment type="similarity">
    <text evidence="1">Belongs to the shikimate kinase family.</text>
</comment>
<protein>
    <recommendedName>
        <fullName evidence="1">Shikimate kinase</fullName>
        <shortName evidence="1">SK</shortName>
        <ecNumber evidence="1">2.7.1.71</ecNumber>
    </recommendedName>
</protein>
<gene>
    <name evidence="1" type="primary">aroK</name>
    <name type="ordered locus">Daud_0989</name>
</gene>
<feature type="chain" id="PRO_1000094387" description="Shikimate kinase">
    <location>
        <begin position="1"/>
        <end position="189"/>
    </location>
</feature>
<feature type="binding site" evidence="1">
    <location>
        <begin position="11"/>
        <end position="16"/>
    </location>
    <ligand>
        <name>ATP</name>
        <dbReference type="ChEBI" id="CHEBI:30616"/>
    </ligand>
</feature>
<feature type="binding site" evidence="1">
    <location>
        <position position="15"/>
    </location>
    <ligand>
        <name>Mg(2+)</name>
        <dbReference type="ChEBI" id="CHEBI:18420"/>
    </ligand>
</feature>
<feature type="binding site" evidence="1">
    <location>
        <position position="33"/>
    </location>
    <ligand>
        <name>substrate</name>
    </ligand>
</feature>
<feature type="binding site" evidence="1">
    <location>
        <position position="57"/>
    </location>
    <ligand>
        <name>substrate</name>
    </ligand>
</feature>
<feature type="binding site" evidence="1">
    <location>
        <position position="79"/>
    </location>
    <ligand>
        <name>substrate</name>
    </ligand>
</feature>
<feature type="binding site" evidence="1">
    <location>
        <position position="117"/>
    </location>
    <ligand>
        <name>ATP</name>
        <dbReference type="ChEBI" id="CHEBI:30616"/>
    </ligand>
</feature>
<feature type="binding site" evidence="1">
    <location>
        <position position="135"/>
    </location>
    <ligand>
        <name>substrate</name>
    </ligand>
</feature>
<reference key="1">
    <citation type="submission" date="2007-10" db="EMBL/GenBank/DDBJ databases">
        <title>Complete sequence of chromosome of Desulforudis audaxviator MP104C.</title>
        <authorList>
            <person name="Copeland A."/>
            <person name="Lucas S."/>
            <person name="Lapidus A."/>
            <person name="Barry K."/>
            <person name="Glavina del Rio T."/>
            <person name="Dalin E."/>
            <person name="Tice H."/>
            <person name="Bruce D."/>
            <person name="Pitluck S."/>
            <person name="Lowry S.R."/>
            <person name="Larimer F."/>
            <person name="Land M.L."/>
            <person name="Hauser L."/>
            <person name="Kyrpides N."/>
            <person name="Ivanova N.N."/>
            <person name="Richardson P."/>
        </authorList>
    </citation>
    <scope>NUCLEOTIDE SEQUENCE [LARGE SCALE GENOMIC DNA]</scope>
    <source>
        <strain>MP104C</strain>
    </source>
</reference>
<accession>B1I3D6</accession>
<keyword id="KW-0028">Amino-acid biosynthesis</keyword>
<keyword id="KW-0057">Aromatic amino acid biosynthesis</keyword>
<keyword id="KW-0067">ATP-binding</keyword>
<keyword id="KW-0963">Cytoplasm</keyword>
<keyword id="KW-0418">Kinase</keyword>
<keyword id="KW-0460">Magnesium</keyword>
<keyword id="KW-0479">Metal-binding</keyword>
<keyword id="KW-0547">Nucleotide-binding</keyword>
<keyword id="KW-1185">Reference proteome</keyword>
<keyword id="KW-0808">Transferase</keyword>